<keyword id="KW-0067">ATP-binding</keyword>
<keyword id="KW-0963">Cytoplasm</keyword>
<keyword id="KW-0235">DNA replication</keyword>
<keyword id="KW-0238">DNA-binding</keyword>
<keyword id="KW-0446">Lipid-binding</keyword>
<keyword id="KW-0547">Nucleotide-binding</keyword>
<keyword id="KW-1185">Reference proteome</keyword>
<name>DNAA_THERP</name>
<evidence type="ECO:0000255" key="1">
    <source>
        <dbReference type="HAMAP-Rule" id="MF_00377"/>
    </source>
</evidence>
<evidence type="ECO:0000256" key="2">
    <source>
        <dbReference type="SAM" id="MobiDB-lite"/>
    </source>
</evidence>
<accession>B9L0U6</accession>
<protein>
    <recommendedName>
        <fullName evidence="1">Chromosomal replication initiator protein DnaA</fullName>
    </recommendedName>
</protein>
<comment type="function">
    <text evidence="1">Plays an essential role in the initiation and regulation of chromosomal replication. ATP-DnaA binds to the origin of replication (oriC) to initiate formation of the DNA replication initiation complex once per cell cycle. Binds the DnaA box (a 9 base pair repeat at the origin) and separates the double-stranded (ds)DNA. Forms a right-handed helical filament on oriC DNA; dsDNA binds to the exterior of the filament while single-stranded (ss)DNA is stabiized in the filament's interior. The ATP-DnaA-oriC complex binds and stabilizes one strand of the AT-rich DNA unwinding element (DUE), permitting loading of DNA polymerase. After initiation quickly degrades to an ADP-DnaA complex that is not apt for DNA replication. Binds acidic phospholipids.</text>
</comment>
<comment type="subunit">
    <text evidence="1">Oligomerizes as a right-handed, spiral filament on DNA at oriC.</text>
</comment>
<comment type="subcellular location">
    <subcellularLocation>
        <location evidence="1">Cytoplasm</location>
    </subcellularLocation>
</comment>
<comment type="domain">
    <text evidence="1">Domain I is involved in oligomerization and binding regulators, domain II is flexibile and of varying length in different bacteria, domain III forms the AAA+ region, while domain IV binds dsDNA.</text>
</comment>
<comment type="similarity">
    <text evidence="1">Belongs to the DnaA family.</text>
</comment>
<organism>
    <name type="scientific">Thermomicrobium roseum (strain ATCC 27502 / DSM 5159 / P-2)</name>
    <dbReference type="NCBI Taxonomy" id="309801"/>
    <lineage>
        <taxon>Bacteria</taxon>
        <taxon>Pseudomonadati</taxon>
        <taxon>Thermomicrobiota</taxon>
        <taxon>Thermomicrobia</taxon>
        <taxon>Thermomicrobiales</taxon>
        <taxon>Thermomicrobiaceae</taxon>
        <taxon>Thermomicrobium</taxon>
    </lineage>
</organism>
<gene>
    <name evidence="1" type="primary">dnaA</name>
    <name type="ordered locus">trd_1166</name>
</gene>
<proteinExistence type="inferred from homology"/>
<dbReference type="EMBL" id="CP001275">
    <property type="protein sequence ID" value="ACM05694.1"/>
    <property type="molecule type" value="Genomic_DNA"/>
</dbReference>
<dbReference type="RefSeq" id="WP_015922120.1">
    <property type="nucleotide sequence ID" value="NC_011959.1"/>
</dbReference>
<dbReference type="SMR" id="B9L0U6"/>
<dbReference type="STRING" id="309801.trd_1166"/>
<dbReference type="KEGG" id="tro:trd_1166"/>
<dbReference type="eggNOG" id="COG0593">
    <property type="taxonomic scope" value="Bacteria"/>
</dbReference>
<dbReference type="HOGENOM" id="CLU_026910_3_1_0"/>
<dbReference type="OrthoDB" id="9807019at2"/>
<dbReference type="Proteomes" id="UP000000447">
    <property type="component" value="Chromosome"/>
</dbReference>
<dbReference type="GO" id="GO:0005737">
    <property type="term" value="C:cytoplasm"/>
    <property type="evidence" value="ECO:0007669"/>
    <property type="project" value="UniProtKB-SubCell"/>
</dbReference>
<dbReference type="GO" id="GO:0005886">
    <property type="term" value="C:plasma membrane"/>
    <property type="evidence" value="ECO:0007669"/>
    <property type="project" value="TreeGrafter"/>
</dbReference>
<dbReference type="GO" id="GO:0005524">
    <property type="term" value="F:ATP binding"/>
    <property type="evidence" value="ECO:0007669"/>
    <property type="project" value="UniProtKB-UniRule"/>
</dbReference>
<dbReference type="GO" id="GO:0016887">
    <property type="term" value="F:ATP hydrolysis activity"/>
    <property type="evidence" value="ECO:0007669"/>
    <property type="project" value="InterPro"/>
</dbReference>
<dbReference type="GO" id="GO:0003688">
    <property type="term" value="F:DNA replication origin binding"/>
    <property type="evidence" value="ECO:0007669"/>
    <property type="project" value="UniProtKB-UniRule"/>
</dbReference>
<dbReference type="GO" id="GO:0008289">
    <property type="term" value="F:lipid binding"/>
    <property type="evidence" value="ECO:0007669"/>
    <property type="project" value="UniProtKB-KW"/>
</dbReference>
<dbReference type="GO" id="GO:0006270">
    <property type="term" value="P:DNA replication initiation"/>
    <property type="evidence" value="ECO:0007669"/>
    <property type="project" value="UniProtKB-UniRule"/>
</dbReference>
<dbReference type="GO" id="GO:0006275">
    <property type="term" value="P:regulation of DNA replication"/>
    <property type="evidence" value="ECO:0007669"/>
    <property type="project" value="UniProtKB-UniRule"/>
</dbReference>
<dbReference type="CDD" id="cd00009">
    <property type="entry name" value="AAA"/>
    <property type="match status" value="1"/>
</dbReference>
<dbReference type="CDD" id="cd06571">
    <property type="entry name" value="Bac_DnaA_C"/>
    <property type="match status" value="1"/>
</dbReference>
<dbReference type="FunFam" id="3.40.50.300:FF:000150">
    <property type="entry name" value="Chromosomal replication initiator protein DnaA"/>
    <property type="match status" value="1"/>
</dbReference>
<dbReference type="Gene3D" id="1.10.1750.10">
    <property type="match status" value="1"/>
</dbReference>
<dbReference type="Gene3D" id="1.10.8.60">
    <property type="match status" value="1"/>
</dbReference>
<dbReference type="Gene3D" id="3.30.300.180">
    <property type="match status" value="1"/>
</dbReference>
<dbReference type="Gene3D" id="3.40.50.300">
    <property type="entry name" value="P-loop containing nucleotide triphosphate hydrolases"/>
    <property type="match status" value="1"/>
</dbReference>
<dbReference type="HAMAP" id="MF_00377">
    <property type="entry name" value="DnaA_bact"/>
    <property type="match status" value="1"/>
</dbReference>
<dbReference type="InterPro" id="IPR003593">
    <property type="entry name" value="AAA+_ATPase"/>
</dbReference>
<dbReference type="InterPro" id="IPR001957">
    <property type="entry name" value="Chromosome_initiator_DnaA"/>
</dbReference>
<dbReference type="InterPro" id="IPR020591">
    <property type="entry name" value="Chromosome_initiator_DnaA-like"/>
</dbReference>
<dbReference type="InterPro" id="IPR018312">
    <property type="entry name" value="Chromosome_initiator_DnaA_CS"/>
</dbReference>
<dbReference type="InterPro" id="IPR013159">
    <property type="entry name" value="DnaA_C"/>
</dbReference>
<dbReference type="InterPro" id="IPR013317">
    <property type="entry name" value="DnaA_dom"/>
</dbReference>
<dbReference type="InterPro" id="IPR024633">
    <property type="entry name" value="DnaA_N_dom"/>
</dbReference>
<dbReference type="InterPro" id="IPR038454">
    <property type="entry name" value="DnaA_N_sf"/>
</dbReference>
<dbReference type="InterPro" id="IPR027417">
    <property type="entry name" value="P-loop_NTPase"/>
</dbReference>
<dbReference type="InterPro" id="IPR010921">
    <property type="entry name" value="Trp_repressor/repl_initiator"/>
</dbReference>
<dbReference type="NCBIfam" id="TIGR00362">
    <property type="entry name" value="DnaA"/>
    <property type="match status" value="1"/>
</dbReference>
<dbReference type="PANTHER" id="PTHR30050">
    <property type="entry name" value="CHROMOSOMAL REPLICATION INITIATOR PROTEIN DNAA"/>
    <property type="match status" value="1"/>
</dbReference>
<dbReference type="PANTHER" id="PTHR30050:SF2">
    <property type="entry name" value="CHROMOSOMAL REPLICATION INITIATOR PROTEIN DNAA"/>
    <property type="match status" value="1"/>
</dbReference>
<dbReference type="Pfam" id="PF00308">
    <property type="entry name" value="Bac_DnaA"/>
    <property type="match status" value="1"/>
</dbReference>
<dbReference type="Pfam" id="PF08299">
    <property type="entry name" value="Bac_DnaA_C"/>
    <property type="match status" value="1"/>
</dbReference>
<dbReference type="Pfam" id="PF11638">
    <property type="entry name" value="DnaA_N"/>
    <property type="match status" value="1"/>
</dbReference>
<dbReference type="PRINTS" id="PR00051">
    <property type="entry name" value="DNAA"/>
</dbReference>
<dbReference type="SMART" id="SM00382">
    <property type="entry name" value="AAA"/>
    <property type="match status" value="1"/>
</dbReference>
<dbReference type="SMART" id="SM00760">
    <property type="entry name" value="Bac_DnaA_C"/>
    <property type="match status" value="1"/>
</dbReference>
<dbReference type="SUPFAM" id="SSF52540">
    <property type="entry name" value="P-loop containing nucleoside triphosphate hydrolases"/>
    <property type="match status" value="1"/>
</dbReference>
<dbReference type="SUPFAM" id="SSF48295">
    <property type="entry name" value="TrpR-like"/>
    <property type="match status" value="1"/>
</dbReference>
<dbReference type="PROSITE" id="PS01008">
    <property type="entry name" value="DNAA"/>
    <property type="match status" value="1"/>
</dbReference>
<reference key="1">
    <citation type="journal article" date="2009" name="PLoS ONE">
        <title>Complete genome sequence of the aerobic CO-oxidizing thermophile Thermomicrobium roseum.</title>
        <authorList>
            <person name="Wu D."/>
            <person name="Raymond J."/>
            <person name="Wu M."/>
            <person name="Chatterji S."/>
            <person name="Ren Q."/>
            <person name="Graham J.E."/>
            <person name="Bryant D.A."/>
            <person name="Robb F."/>
            <person name="Colman A."/>
            <person name="Tallon L.J."/>
            <person name="Badger J.H."/>
            <person name="Madupu R."/>
            <person name="Ward N.L."/>
            <person name="Eisen J.A."/>
        </authorList>
    </citation>
    <scope>NUCLEOTIDE SEQUENCE [LARGE SCALE GENOMIC DNA]</scope>
    <source>
        <strain>ATCC 27502 / DSM 5159 / P-2</strain>
    </source>
</reference>
<sequence>MRTKQLWQVALGDLAKRVSRANFETWLKHTELVALEGERATIAAPSSFAAEQLRNKFAADIQETLSLLLGRPIAVHFTVHGQDDEEHPVQRRPQRRALASEEGSASKQLSLTPSPEHGLNPRYTFEKFVVGPNNRLAHAAALAVADRPGEKFNPLFIYGGVGLGKTHLLHAIGHRALANRPTLKVCYVSSEVFTNELINAIRHQRTDDFRNRYRTIDILMIDDIQFIAGKESTQEEFFHTFNALYQSGKQIVISSDRPPRLIPDLADRLRSRFEGGLLADIQPPDLETRQAILIEKGRELGVQMPSDVVEFVARRIESNIRELEGALNRIVALAQLTHQPITLALAVEALREGDARAVREQLTPELVLHAVCQHFRVSLAELVGPGRRREIVLPRQIAMYLLREELGLSLVEIGQRLGGRDHTTVLHGVDKVEEQLRSDEQLRADVLAVRARLYEDAKAPLASRH</sequence>
<feature type="chain" id="PRO_1000189817" description="Chromosomal replication initiator protein DnaA">
    <location>
        <begin position="1"/>
        <end position="465"/>
    </location>
</feature>
<feature type="region of interest" description="Domain I, interacts with DnaA modulators" evidence="1">
    <location>
        <begin position="1"/>
        <end position="72"/>
    </location>
</feature>
<feature type="region of interest" description="Domain II" evidence="1">
    <location>
        <begin position="72"/>
        <end position="117"/>
    </location>
</feature>
<feature type="region of interest" description="Disordered" evidence="2">
    <location>
        <begin position="80"/>
        <end position="118"/>
    </location>
</feature>
<feature type="region of interest" description="Domain III, AAA+ region" evidence="1">
    <location>
        <begin position="118"/>
        <end position="334"/>
    </location>
</feature>
<feature type="region of interest" description="Domain IV, binds dsDNA" evidence="1">
    <location>
        <begin position="335"/>
        <end position="465"/>
    </location>
</feature>
<feature type="compositionally biased region" description="Polar residues" evidence="2">
    <location>
        <begin position="103"/>
        <end position="113"/>
    </location>
</feature>
<feature type="binding site" evidence="1">
    <location>
        <position position="162"/>
    </location>
    <ligand>
        <name>ATP</name>
        <dbReference type="ChEBI" id="CHEBI:30616"/>
    </ligand>
</feature>
<feature type="binding site" evidence="1">
    <location>
        <position position="164"/>
    </location>
    <ligand>
        <name>ATP</name>
        <dbReference type="ChEBI" id="CHEBI:30616"/>
    </ligand>
</feature>
<feature type="binding site" evidence="1">
    <location>
        <position position="165"/>
    </location>
    <ligand>
        <name>ATP</name>
        <dbReference type="ChEBI" id="CHEBI:30616"/>
    </ligand>
</feature>
<feature type="binding site" evidence="1">
    <location>
        <position position="166"/>
    </location>
    <ligand>
        <name>ATP</name>
        <dbReference type="ChEBI" id="CHEBI:30616"/>
    </ligand>
</feature>